<evidence type="ECO:0000250" key="1">
    <source>
        <dbReference type="UniProtKB" id="P68137"/>
    </source>
</evidence>
<evidence type="ECO:0000305" key="2"/>
<organism>
    <name type="scientific">Solanum tuberosum</name>
    <name type="common">Potato</name>
    <dbReference type="NCBI Taxonomy" id="4113"/>
    <lineage>
        <taxon>Eukaryota</taxon>
        <taxon>Viridiplantae</taxon>
        <taxon>Streptophyta</taxon>
        <taxon>Embryophyta</taxon>
        <taxon>Tracheophyta</taxon>
        <taxon>Spermatophyta</taxon>
        <taxon>Magnoliopsida</taxon>
        <taxon>eudicotyledons</taxon>
        <taxon>Gunneridae</taxon>
        <taxon>Pentapetalae</taxon>
        <taxon>asterids</taxon>
        <taxon>lamiids</taxon>
        <taxon>Solanales</taxon>
        <taxon>Solanaceae</taxon>
        <taxon>Solanoideae</taxon>
        <taxon>Solaneae</taxon>
        <taxon>Solanum</taxon>
    </lineage>
</organism>
<comment type="function">
    <text>Actins are highly conserved proteins that are involved in various types of cell motility and are ubiquitously expressed in all eukaryotic cells. Essential component of cell cytoskeleton; plays an important role in cytoplasmic streaming, cell shape determination, cell division, organelle movement and extension growth.</text>
</comment>
<comment type="catalytic activity">
    <reaction evidence="1">
        <text>ATP + H2O = ADP + phosphate + H(+)</text>
        <dbReference type="Rhea" id="RHEA:13065"/>
        <dbReference type="ChEBI" id="CHEBI:15377"/>
        <dbReference type="ChEBI" id="CHEBI:15378"/>
        <dbReference type="ChEBI" id="CHEBI:30616"/>
        <dbReference type="ChEBI" id="CHEBI:43474"/>
        <dbReference type="ChEBI" id="CHEBI:456216"/>
    </reaction>
</comment>
<comment type="subcellular location">
    <subcellularLocation>
        <location>Cytoplasm</location>
        <location>Cytoskeleton</location>
    </subcellularLocation>
</comment>
<comment type="miscellaneous">
    <text>There are at least 13 actin genes in potato.</text>
</comment>
<comment type="similarity">
    <text evidence="2">Belongs to the actin family.</text>
</comment>
<sequence>AGFAGDDAPRAVFPSIVGRPRHTGVMVGMGQKDAYVGDEAQSKRGILTLKYPIEHGIVSNWDDMEKIWHHTFYNELRVSPDEHPVLLTEAPLNPKANREKMTQIMFETFNVPAMYVAIQAVLSLYASGRTTGIVLDSGDGVSHTVPIYEGYALPHAILRLDLAGRDLTDCLMKILTERGYSFTTSAEREIVRDMKEKLAYVALDYEQELETAKSSSAVEKSYELPDGQVITIGAERFRCPEVLFQPSLVGMEAAGIHETTYNSIMKCDVDIRKDLYGNIVLSGGTTMFPGIADRMSKEITALAPSSMKIKVVAPPERKYSVWIGGSILASLSTFQQMWITKGEYDESGPSIVHRKCF</sequence>
<name>ACT12_SOLTU</name>
<accession>P30172</accession>
<dbReference type="EC" id="3.6.4.-" evidence="1"/>
<dbReference type="EMBL" id="X55746">
    <property type="protein sequence ID" value="CAA39276.1"/>
    <property type="molecule type" value="Genomic_DNA"/>
</dbReference>
<dbReference type="SMR" id="P30172"/>
<dbReference type="STRING" id="4113.P30172"/>
<dbReference type="InParanoid" id="P30172"/>
<dbReference type="Proteomes" id="UP000011115">
    <property type="component" value="Unassembled WGS sequence"/>
</dbReference>
<dbReference type="ExpressionAtlas" id="P30172">
    <property type="expression patterns" value="baseline"/>
</dbReference>
<dbReference type="GO" id="GO:0015629">
    <property type="term" value="C:actin cytoskeleton"/>
    <property type="evidence" value="ECO:0000318"/>
    <property type="project" value="GO_Central"/>
</dbReference>
<dbReference type="GO" id="GO:0005737">
    <property type="term" value="C:cytoplasm"/>
    <property type="evidence" value="ECO:0007669"/>
    <property type="project" value="UniProtKB-KW"/>
</dbReference>
<dbReference type="GO" id="GO:0005524">
    <property type="term" value="F:ATP binding"/>
    <property type="evidence" value="ECO:0007669"/>
    <property type="project" value="UniProtKB-KW"/>
</dbReference>
<dbReference type="GO" id="GO:0016787">
    <property type="term" value="F:hydrolase activity"/>
    <property type="evidence" value="ECO:0007669"/>
    <property type="project" value="UniProtKB-KW"/>
</dbReference>
<dbReference type="CDD" id="cd10224">
    <property type="entry name" value="ASKHA_NBD_actin"/>
    <property type="match status" value="1"/>
</dbReference>
<dbReference type="FunFam" id="3.30.420.40:FF:000291">
    <property type="entry name" value="Actin, alpha skeletal muscle"/>
    <property type="match status" value="1"/>
</dbReference>
<dbReference type="FunFam" id="3.90.640.10:FF:000001">
    <property type="entry name" value="Actin, muscle"/>
    <property type="match status" value="1"/>
</dbReference>
<dbReference type="FunFam" id="3.30.420.40:FF:000404">
    <property type="entry name" value="Major actin"/>
    <property type="match status" value="1"/>
</dbReference>
<dbReference type="FunFam" id="3.30.420.40:FF:000058">
    <property type="entry name" value="Putative actin-related protein 5"/>
    <property type="match status" value="1"/>
</dbReference>
<dbReference type="Gene3D" id="3.30.420.40">
    <property type="match status" value="2"/>
</dbReference>
<dbReference type="Gene3D" id="3.90.640.10">
    <property type="entry name" value="Actin, Chain A, domain 4"/>
    <property type="match status" value="1"/>
</dbReference>
<dbReference type="InterPro" id="IPR004000">
    <property type="entry name" value="Actin"/>
</dbReference>
<dbReference type="InterPro" id="IPR020902">
    <property type="entry name" value="Actin/actin-like_CS"/>
</dbReference>
<dbReference type="InterPro" id="IPR004001">
    <property type="entry name" value="Actin_CS"/>
</dbReference>
<dbReference type="InterPro" id="IPR043129">
    <property type="entry name" value="ATPase_NBD"/>
</dbReference>
<dbReference type="PANTHER" id="PTHR11937">
    <property type="entry name" value="ACTIN"/>
    <property type="match status" value="1"/>
</dbReference>
<dbReference type="Pfam" id="PF00022">
    <property type="entry name" value="Actin"/>
    <property type="match status" value="1"/>
</dbReference>
<dbReference type="PRINTS" id="PR00190">
    <property type="entry name" value="ACTIN"/>
</dbReference>
<dbReference type="SMART" id="SM00268">
    <property type="entry name" value="ACTIN"/>
    <property type="match status" value="1"/>
</dbReference>
<dbReference type="SUPFAM" id="SSF53067">
    <property type="entry name" value="Actin-like ATPase domain"/>
    <property type="match status" value="2"/>
</dbReference>
<dbReference type="PROSITE" id="PS00406">
    <property type="entry name" value="ACTINS_1"/>
    <property type="match status" value="1"/>
</dbReference>
<dbReference type="PROSITE" id="PS00432">
    <property type="entry name" value="ACTINS_2"/>
    <property type="match status" value="1"/>
</dbReference>
<dbReference type="PROSITE" id="PS01132">
    <property type="entry name" value="ACTINS_ACT_LIKE"/>
    <property type="match status" value="1"/>
</dbReference>
<feature type="chain" id="PRO_0000089019" description="Actin-100">
    <location>
        <begin position="1" status="less than"/>
        <end position="357"/>
    </location>
</feature>
<feature type="non-terminal residue">
    <location>
        <position position="1"/>
    </location>
</feature>
<protein>
    <recommendedName>
        <fullName>Actin-100</fullName>
        <ecNumber evidence="1">3.6.4.-</ecNumber>
    </recommendedName>
</protein>
<reference key="1">
    <citation type="journal article" date="1990" name="J. Mol. Evol.">
        <title>Independent gene evolution in the potato actin gene family demonstrated by phylogenetic procedures for resolving gene conversions and the phylogeny of angiosperm actin genes.</title>
        <authorList>
            <person name="Drouin G."/>
            <person name="Dover G.A."/>
        </authorList>
    </citation>
    <scope>NUCLEOTIDE SEQUENCE [GENOMIC DNA]</scope>
    <source>
        <strain>cv. Maris Piper</strain>
        <tissue>Leaf</tissue>
    </source>
</reference>
<keyword id="KW-0067">ATP-binding</keyword>
<keyword id="KW-0963">Cytoplasm</keyword>
<keyword id="KW-0206">Cytoskeleton</keyword>
<keyword id="KW-0378">Hydrolase</keyword>
<keyword id="KW-0547">Nucleotide-binding</keyword>
<keyword id="KW-1185">Reference proteome</keyword>
<gene>
    <name type="primary">AC100</name>
</gene>
<proteinExistence type="inferred from homology"/>